<name>CUD2_SCHGR</name>
<sequence length="135" mass="15107">QFGNYYQPQPTYSPPARQQVPILQYSNEVNPDGSYAYSYQTGNGIAAQEQGYLKNPGQRDLEAENVQGTFSYTAPDGTPISLRYVADENGFRAEGAHLPTPPPIPEAIARSLEVIARTPQQPFQPQPQYNPFRRF</sequence>
<accession>Q7M4F3</accession>
<dbReference type="PIR" id="S78092">
    <property type="entry name" value="S78092"/>
</dbReference>
<dbReference type="OrthoDB" id="6379191at2759"/>
<dbReference type="GO" id="GO:0062129">
    <property type="term" value="C:chitin-based extracellular matrix"/>
    <property type="evidence" value="ECO:0007669"/>
    <property type="project" value="TreeGrafter"/>
</dbReference>
<dbReference type="GO" id="GO:0008010">
    <property type="term" value="F:structural constituent of chitin-based larval cuticle"/>
    <property type="evidence" value="ECO:0007669"/>
    <property type="project" value="TreeGrafter"/>
</dbReference>
<dbReference type="InterPro" id="IPR031311">
    <property type="entry name" value="CHIT_BIND_RR_consensus"/>
</dbReference>
<dbReference type="InterPro" id="IPR050468">
    <property type="entry name" value="Cuticle_Struct_Prot"/>
</dbReference>
<dbReference type="InterPro" id="IPR000618">
    <property type="entry name" value="Insect_cuticle"/>
</dbReference>
<dbReference type="PANTHER" id="PTHR10380">
    <property type="entry name" value="CUTICLE PROTEIN"/>
    <property type="match status" value="1"/>
</dbReference>
<dbReference type="PANTHER" id="PTHR10380:SF173">
    <property type="entry name" value="CUTICULAR PROTEIN 47EF, ISOFORM C-RELATED"/>
    <property type="match status" value="1"/>
</dbReference>
<dbReference type="Pfam" id="PF00379">
    <property type="entry name" value="Chitin_bind_4"/>
    <property type="match status" value="1"/>
</dbReference>
<dbReference type="PRINTS" id="PR00947">
    <property type="entry name" value="CUTICLE"/>
</dbReference>
<dbReference type="PROSITE" id="PS00233">
    <property type="entry name" value="CHIT_BIND_RR_1"/>
    <property type="match status" value="1"/>
</dbReference>
<dbReference type="PROSITE" id="PS51155">
    <property type="entry name" value="CHIT_BIND_RR_2"/>
    <property type="match status" value="1"/>
</dbReference>
<protein>
    <recommendedName>
        <fullName>Endocuticle structural glycoprotein SgAbd-2</fullName>
    </recommendedName>
</protein>
<proteinExistence type="evidence at protein level"/>
<organism>
    <name type="scientific">Schistocerca gregaria</name>
    <name type="common">Desert locust</name>
    <name type="synonym">Gryllus gregarius</name>
    <dbReference type="NCBI Taxonomy" id="7010"/>
    <lineage>
        <taxon>Eukaryota</taxon>
        <taxon>Metazoa</taxon>
        <taxon>Ecdysozoa</taxon>
        <taxon>Arthropoda</taxon>
        <taxon>Hexapoda</taxon>
        <taxon>Insecta</taxon>
        <taxon>Pterygota</taxon>
        <taxon>Neoptera</taxon>
        <taxon>Polyneoptera</taxon>
        <taxon>Orthoptera</taxon>
        <taxon>Caelifera</taxon>
        <taxon>Acrididea</taxon>
        <taxon>Acridomorpha</taxon>
        <taxon>Acridoidea</taxon>
        <taxon>Acrididae</taxon>
        <taxon>Cyrtacanthacridinae</taxon>
        <taxon>Schistocerca</taxon>
    </lineage>
</organism>
<comment type="function">
    <text>Component of the abdominal endocuticle.</text>
</comment>
<reference key="1">
    <citation type="journal article" date="1998" name="Insect Biochem. Mol. Biol.">
        <title>Amino acid sequence studies on endocuticular proteins from the desert locust, Schistocerca gregaria.</title>
        <authorList>
            <person name="Andersen S.O."/>
        </authorList>
    </citation>
    <scope>PROTEIN SEQUENCE</scope>
    <scope>PYROGLUTAMATE FORMATION AT GLN-1</scope>
    <scope>POST-TRANSLATIONAL MODIFICATIONS</scope>
    <source>
        <strain>Albino</strain>
        <tissue>Cuticle</tissue>
    </source>
</reference>
<evidence type="ECO:0000255" key="1">
    <source>
        <dbReference type="PROSITE-ProRule" id="PRU00497"/>
    </source>
</evidence>
<evidence type="ECO:0000269" key="2">
    <source>
    </source>
</evidence>
<feature type="chain" id="PRO_0000196119" description="Endocuticle structural glycoprotein SgAbd-2">
    <location>
        <begin position="1"/>
        <end position="135"/>
    </location>
</feature>
<feature type="domain" description="Chitin-binding type R&amp;R" evidence="1">
    <location>
        <begin position="32"/>
        <end position="102"/>
    </location>
</feature>
<feature type="modified residue" description="Pyrrolidone carboxylic acid" evidence="2">
    <location>
        <position position="1"/>
    </location>
</feature>
<feature type="glycosylation site" description="O-linked (HexNAc...) threonine">
    <location>
        <position position="11"/>
    </location>
</feature>
<feature type="glycosylation site" description="O-linked (HexNAc...) threonine">
    <location>
        <position position="100"/>
    </location>
</feature>
<keyword id="KW-0193">Cuticle</keyword>
<keyword id="KW-0903">Direct protein sequencing</keyword>
<keyword id="KW-0325">Glycoprotein</keyword>
<keyword id="KW-0873">Pyrrolidone carboxylic acid</keyword>